<accession>A4YCU5</accession>
<keyword id="KW-1185">Reference proteome</keyword>
<keyword id="KW-0687">Ribonucleoprotein</keyword>
<keyword id="KW-0689">Ribosomal protein</keyword>
<evidence type="ECO:0000255" key="1">
    <source>
        <dbReference type="HAMAP-Rule" id="MF_00256"/>
    </source>
</evidence>
<evidence type="ECO:0000305" key="2"/>
<comment type="similarity">
    <text evidence="1">Belongs to the eukaryotic ribosomal protein eL15 family.</text>
</comment>
<protein>
    <recommendedName>
        <fullName evidence="1">Large ribosomal subunit protein eL15</fullName>
    </recommendedName>
    <alternativeName>
        <fullName evidence="2">50S ribosomal protein L15e</fullName>
    </alternativeName>
</protein>
<sequence>MVASAYSFMASTWASEEWKKTVIRQRLVEWRNQNTVTRIEKPTRLDRARALGYKAKQGIIVARVKVEKGGMDKQRPNSGRRPKRMGVYGFSPAKSLQFIAEEKAARKFPGLEVLGSYYVAEDGKYKYYEVILVDPHNPVIMSDPQFNWLKNPANRGRVFRGLTSAGRRTRGLLKSRGLKGTIHYKIARKKKEREQKKRHEASKYYRLAKYDRIPGK</sequence>
<name>RL15E_METS5</name>
<organism>
    <name type="scientific">Metallosphaera sedula (strain ATCC 51363 / DSM 5348 / JCM 9185 / NBRC 15509 / TH2)</name>
    <dbReference type="NCBI Taxonomy" id="399549"/>
    <lineage>
        <taxon>Archaea</taxon>
        <taxon>Thermoproteota</taxon>
        <taxon>Thermoprotei</taxon>
        <taxon>Sulfolobales</taxon>
        <taxon>Sulfolobaceae</taxon>
        <taxon>Metallosphaera</taxon>
    </lineage>
</organism>
<feature type="chain" id="PRO_1000071881" description="Large ribosomal subunit protein eL15">
    <location>
        <begin position="1"/>
        <end position="216"/>
    </location>
</feature>
<reference key="1">
    <citation type="journal article" date="2008" name="Appl. Environ. Microbiol.">
        <title>The genome sequence of the metal-mobilizing, extremely thermoacidophilic archaeon Metallosphaera sedula provides insights into bioleaching-associated metabolism.</title>
        <authorList>
            <person name="Auernik K.S."/>
            <person name="Maezato Y."/>
            <person name="Blum P.H."/>
            <person name="Kelly R.M."/>
        </authorList>
    </citation>
    <scope>NUCLEOTIDE SEQUENCE [LARGE SCALE GENOMIC DNA]</scope>
    <source>
        <strain>ATCC 51363 / DSM 5348 / JCM 9185 / NBRC 15509 / TH2</strain>
    </source>
</reference>
<proteinExistence type="inferred from homology"/>
<gene>
    <name evidence="1" type="primary">rpl15e</name>
    <name type="ordered locus">Msed_0070</name>
</gene>
<dbReference type="EMBL" id="CP000682">
    <property type="protein sequence ID" value="ABP94247.1"/>
    <property type="molecule type" value="Genomic_DNA"/>
</dbReference>
<dbReference type="RefSeq" id="WP_011921216.1">
    <property type="nucleotide sequence ID" value="NC_009440.1"/>
</dbReference>
<dbReference type="SMR" id="A4YCU5"/>
<dbReference type="STRING" id="399549.Msed_0070"/>
<dbReference type="GeneID" id="91756925"/>
<dbReference type="KEGG" id="mse:Msed_0070"/>
<dbReference type="eggNOG" id="arCOG04209">
    <property type="taxonomic scope" value="Archaea"/>
</dbReference>
<dbReference type="HOGENOM" id="CLU_080796_1_0_2"/>
<dbReference type="Proteomes" id="UP000000242">
    <property type="component" value="Chromosome"/>
</dbReference>
<dbReference type="GO" id="GO:0022625">
    <property type="term" value="C:cytosolic large ribosomal subunit"/>
    <property type="evidence" value="ECO:0007669"/>
    <property type="project" value="TreeGrafter"/>
</dbReference>
<dbReference type="GO" id="GO:0003723">
    <property type="term" value="F:RNA binding"/>
    <property type="evidence" value="ECO:0007669"/>
    <property type="project" value="TreeGrafter"/>
</dbReference>
<dbReference type="GO" id="GO:0003735">
    <property type="term" value="F:structural constituent of ribosome"/>
    <property type="evidence" value="ECO:0007669"/>
    <property type="project" value="InterPro"/>
</dbReference>
<dbReference type="GO" id="GO:0002181">
    <property type="term" value="P:cytoplasmic translation"/>
    <property type="evidence" value="ECO:0007669"/>
    <property type="project" value="TreeGrafter"/>
</dbReference>
<dbReference type="FunFam" id="3.40.1120.10:FF:000002">
    <property type="entry name" value="50S ribosomal protein L15e"/>
    <property type="match status" value="1"/>
</dbReference>
<dbReference type="Gene3D" id="3.40.1120.10">
    <property type="entry name" value="Ribosomal protein l15e"/>
    <property type="match status" value="1"/>
</dbReference>
<dbReference type="HAMAP" id="MF_00256">
    <property type="entry name" value="Ribosomal_eL15"/>
    <property type="match status" value="1"/>
</dbReference>
<dbReference type="InterPro" id="IPR024794">
    <property type="entry name" value="Rbsml_eL15_core_dom_sf"/>
</dbReference>
<dbReference type="InterPro" id="IPR000439">
    <property type="entry name" value="Ribosomal_eL15"/>
</dbReference>
<dbReference type="InterPro" id="IPR020926">
    <property type="entry name" value="Ribosomal_eL15_arc"/>
</dbReference>
<dbReference type="InterPro" id="IPR012678">
    <property type="entry name" value="Ribosomal_uL23/eL15/eS24_sf"/>
</dbReference>
<dbReference type="NCBIfam" id="NF003269">
    <property type="entry name" value="PRK04243.1"/>
    <property type="match status" value="1"/>
</dbReference>
<dbReference type="PANTHER" id="PTHR11847:SF4">
    <property type="entry name" value="LARGE RIBOSOMAL SUBUNIT PROTEIN EL15"/>
    <property type="match status" value="1"/>
</dbReference>
<dbReference type="PANTHER" id="PTHR11847">
    <property type="entry name" value="RIBOSOMAL PROTEIN L15"/>
    <property type="match status" value="1"/>
</dbReference>
<dbReference type="Pfam" id="PF00827">
    <property type="entry name" value="Ribosomal_L15e"/>
    <property type="match status" value="1"/>
</dbReference>
<dbReference type="SMART" id="SM01384">
    <property type="entry name" value="Ribosomal_L15e"/>
    <property type="match status" value="1"/>
</dbReference>
<dbReference type="SUPFAM" id="SSF54189">
    <property type="entry name" value="Ribosomal proteins S24e, L23 and L15e"/>
    <property type="match status" value="1"/>
</dbReference>